<protein>
    <recommendedName>
        <fullName evidence="13">Golgi to ER traffic protein 4 homolog</fullName>
    </recommendedName>
    <alternativeName>
        <fullName>Conserved edge-expressed protein</fullName>
    </alternativeName>
    <alternativeName>
        <fullName>Transmembrane domain recognition complex 35 kDa subunit</fullName>
        <shortName>TRC35</shortName>
    </alternativeName>
</protein>
<proteinExistence type="evidence at protein level"/>
<evidence type="ECO:0000256" key="1">
    <source>
        <dbReference type="SAM" id="MobiDB-lite"/>
    </source>
</evidence>
<evidence type="ECO:0000269" key="2">
    <source>
    </source>
</evidence>
<evidence type="ECO:0000269" key="3">
    <source>
    </source>
</evidence>
<evidence type="ECO:0000269" key="4">
    <source>
    </source>
</evidence>
<evidence type="ECO:0000269" key="5">
    <source>
    </source>
</evidence>
<evidence type="ECO:0000269" key="6">
    <source>
    </source>
</evidence>
<evidence type="ECO:0000269" key="7">
    <source>
    </source>
</evidence>
<evidence type="ECO:0000269" key="8">
    <source>
    </source>
</evidence>
<evidence type="ECO:0000269" key="9">
    <source>
    </source>
</evidence>
<evidence type="ECO:0000269" key="10">
    <source ref="5"/>
</evidence>
<evidence type="ECO:0000303" key="11">
    <source>
    </source>
</evidence>
<evidence type="ECO:0000303" key="12">
    <source>
    </source>
</evidence>
<evidence type="ECO:0000305" key="13"/>
<evidence type="ECO:0000312" key="14">
    <source>
        <dbReference type="HGNC" id="HGNC:21690"/>
    </source>
</evidence>
<evidence type="ECO:0007744" key="15">
    <source>
        <dbReference type="PDB" id="6AU8"/>
    </source>
</evidence>
<evidence type="ECO:0007744" key="16">
    <source>
        <dbReference type="PDB" id="7RU9"/>
    </source>
</evidence>
<evidence type="ECO:0007744" key="17">
    <source>
        <dbReference type="PDB" id="7RUA"/>
    </source>
</evidence>
<evidence type="ECO:0007744" key="18">
    <source>
        <dbReference type="PDB" id="7RUC"/>
    </source>
</evidence>
<evidence type="ECO:0007744" key="19">
    <source>
    </source>
</evidence>
<evidence type="ECO:0007744" key="20">
    <source>
    </source>
</evidence>
<evidence type="ECO:0007744" key="21">
    <source>
    </source>
</evidence>
<evidence type="ECO:0007744" key="22">
    <source>
    </source>
</evidence>
<evidence type="ECO:0007829" key="23">
    <source>
        <dbReference type="PDB" id="6AU8"/>
    </source>
</evidence>
<evidence type="ECO:0007829" key="24">
    <source>
        <dbReference type="PDB" id="7RU9"/>
    </source>
</evidence>
<dbReference type="EMBL" id="AK024305">
    <property type="protein sequence ID" value="BAG51289.1"/>
    <property type="molecule type" value="mRNA"/>
</dbReference>
<dbReference type="EMBL" id="AK097899">
    <property type="protein sequence ID" value="BAG53546.1"/>
    <property type="molecule type" value="mRNA"/>
</dbReference>
<dbReference type="EMBL" id="AK125863">
    <property type="protein sequence ID" value="BAG54258.1"/>
    <property type="molecule type" value="mRNA"/>
</dbReference>
<dbReference type="EMBL" id="AL133014">
    <property type="protein sequence ID" value="CAB61355.1"/>
    <property type="molecule type" value="mRNA"/>
</dbReference>
<dbReference type="EMBL" id="CH236965">
    <property type="protein sequence ID" value="EAL23708.1"/>
    <property type="molecule type" value="Genomic_DNA"/>
</dbReference>
<dbReference type="EMBL" id="BC003550">
    <property type="protein sequence ID" value="AAH03550.2"/>
    <property type="molecule type" value="mRNA"/>
</dbReference>
<dbReference type="EMBL" id="AF132954">
    <property type="protein sequence ID" value="AAD27729.1"/>
    <property type="molecule type" value="mRNA"/>
</dbReference>
<dbReference type="CCDS" id="CCDS5317.1">
    <molecule id="Q7L5D6-1"/>
</dbReference>
<dbReference type="PIR" id="T42648">
    <property type="entry name" value="T42648"/>
</dbReference>
<dbReference type="RefSeq" id="NP_057033.2">
    <molecule id="Q7L5D6-1"/>
    <property type="nucleotide sequence ID" value="NM_015949.2"/>
</dbReference>
<dbReference type="PDB" id="6AU8">
    <property type="method" value="X-ray"/>
    <property type="resolution" value="1.80 A"/>
    <property type="chains" value="A=23-305"/>
</dbReference>
<dbReference type="PDB" id="7RU9">
    <property type="method" value="EM"/>
    <property type="resolution" value="3.30 A"/>
    <property type="chains" value="C/F=1-327"/>
</dbReference>
<dbReference type="PDB" id="7RUA">
    <property type="method" value="EM"/>
    <property type="resolution" value="3.40 A"/>
    <property type="chains" value="C/F=1-327"/>
</dbReference>
<dbReference type="PDB" id="7RUC">
    <property type="method" value="EM"/>
    <property type="resolution" value="3.60 A"/>
    <property type="chains" value="C/F=1-327"/>
</dbReference>
<dbReference type="PDBsum" id="6AU8"/>
<dbReference type="PDBsum" id="7RU9"/>
<dbReference type="PDBsum" id="7RUA"/>
<dbReference type="PDBsum" id="7RUC"/>
<dbReference type="EMDB" id="EMD-24700"/>
<dbReference type="EMDB" id="EMD-24701"/>
<dbReference type="EMDB" id="EMD-24702"/>
<dbReference type="SMR" id="Q7L5D6"/>
<dbReference type="BioGRID" id="119636">
    <property type="interactions" value="186"/>
</dbReference>
<dbReference type="ComplexPortal" id="CPX-132">
    <property type="entry name" value="BAT3 complex"/>
</dbReference>
<dbReference type="CORUM" id="Q7L5D6"/>
<dbReference type="FunCoup" id="Q7L5D6">
    <property type="interactions" value="3528"/>
</dbReference>
<dbReference type="IntAct" id="Q7L5D6">
    <property type="interactions" value="97"/>
</dbReference>
<dbReference type="MINT" id="Q7L5D6"/>
<dbReference type="STRING" id="9606.ENSP00000265857"/>
<dbReference type="MoonDB" id="Q7L5D6">
    <property type="type" value="Predicted"/>
</dbReference>
<dbReference type="iPTMnet" id="Q7L5D6"/>
<dbReference type="MetOSite" id="Q7L5D6"/>
<dbReference type="PhosphoSitePlus" id="Q7L5D6"/>
<dbReference type="BioMuta" id="GET4"/>
<dbReference type="DMDM" id="74738593"/>
<dbReference type="jPOST" id="Q7L5D6"/>
<dbReference type="MassIVE" id="Q7L5D6"/>
<dbReference type="PaxDb" id="9606-ENSP00000265857"/>
<dbReference type="PeptideAtlas" id="Q7L5D6"/>
<dbReference type="ProteomicsDB" id="68807">
    <molecule id="Q7L5D6-1"/>
</dbReference>
<dbReference type="ProteomicsDB" id="68808">
    <molecule id="Q7L5D6-2"/>
</dbReference>
<dbReference type="Pumba" id="Q7L5D6"/>
<dbReference type="Antibodypedia" id="34834">
    <property type="antibodies" value="57 antibodies from 16 providers"/>
</dbReference>
<dbReference type="DNASU" id="51608"/>
<dbReference type="Ensembl" id="ENST00000265857.8">
    <molecule id="Q7L5D6-1"/>
    <property type="protein sequence ID" value="ENSP00000265857.3"/>
    <property type="gene ID" value="ENSG00000239857.7"/>
</dbReference>
<dbReference type="Ensembl" id="ENST00000407192.5">
    <molecule id="Q7L5D6-2"/>
    <property type="protein sequence ID" value="ENSP00000385646.1"/>
    <property type="gene ID" value="ENSG00000239857.7"/>
</dbReference>
<dbReference type="GeneID" id="51608"/>
<dbReference type="KEGG" id="hsa:51608"/>
<dbReference type="MANE-Select" id="ENST00000265857.8">
    <property type="protein sequence ID" value="ENSP00000265857.3"/>
    <property type="RefSeq nucleotide sequence ID" value="NM_015949.3"/>
    <property type="RefSeq protein sequence ID" value="NP_057033.2"/>
</dbReference>
<dbReference type="UCSC" id="uc003sjl.2">
    <molecule id="Q7L5D6-1"/>
    <property type="organism name" value="human"/>
</dbReference>
<dbReference type="AGR" id="HGNC:21690"/>
<dbReference type="CTD" id="51608"/>
<dbReference type="DisGeNET" id="51608"/>
<dbReference type="GeneCards" id="GET4"/>
<dbReference type="HGNC" id="HGNC:21690">
    <property type="gene designation" value="GET4"/>
</dbReference>
<dbReference type="HPA" id="ENSG00000239857">
    <property type="expression patterns" value="Low tissue specificity"/>
</dbReference>
<dbReference type="MalaCards" id="GET4"/>
<dbReference type="MIM" id="612056">
    <property type="type" value="gene"/>
</dbReference>
<dbReference type="MIM" id="620200">
    <property type="type" value="phenotype"/>
</dbReference>
<dbReference type="neXtProt" id="NX_Q7L5D6"/>
<dbReference type="OpenTargets" id="ENSG00000239857"/>
<dbReference type="PharmGKB" id="PA165618100"/>
<dbReference type="VEuPathDB" id="HostDB:ENSG00000239857"/>
<dbReference type="eggNOG" id="KOG3024">
    <property type="taxonomic scope" value="Eukaryota"/>
</dbReference>
<dbReference type="GeneTree" id="ENSGT00390000015750"/>
<dbReference type="HOGENOM" id="CLU_046061_2_0_1"/>
<dbReference type="InParanoid" id="Q7L5D6"/>
<dbReference type="OMA" id="LMDMMGM"/>
<dbReference type="OrthoDB" id="10252405at2759"/>
<dbReference type="PAN-GO" id="Q7L5D6">
    <property type="GO annotations" value="3 GO annotations based on evolutionary models"/>
</dbReference>
<dbReference type="PhylomeDB" id="Q7L5D6"/>
<dbReference type="TreeFam" id="TF315163"/>
<dbReference type="PathwayCommons" id="Q7L5D6"/>
<dbReference type="Reactome" id="R-HSA-9609523">
    <property type="pathway name" value="Insertion of tail-anchored proteins into the endoplasmic reticulum membrane"/>
</dbReference>
<dbReference type="SignaLink" id="Q7L5D6"/>
<dbReference type="BioGRID-ORCS" id="51608">
    <property type="hits" value="231 hits in 1167 CRISPR screens"/>
</dbReference>
<dbReference type="ChiTaRS" id="GET4">
    <property type="organism name" value="human"/>
</dbReference>
<dbReference type="GeneWiki" id="C7orf20"/>
<dbReference type="GenomeRNAi" id="51608"/>
<dbReference type="Pharos" id="Q7L5D6">
    <property type="development level" value="Tbio"/>
</dbReference>
<dbReference type="PRO" id="PR:Q7L5D6"/>
<dbReference type="Proteomes" id="UP000005640">
    <property type="component" value="Chromosome 7"/>
</dbReference>
<dbReference type="RNAct" id="Q7L5D6">
    <property type="molecule type" value="protein"/>
</dbReference>
<dbReference type="Bgee" id="ENSG00000239857">
    <property type="expression patterns" value="Expressed in left testis and 95 other cell types or tissues"/>
</dbReference>
<dbReference type="ExpressionAtlas" id="Q7L5D6">
    <property type="expression patterns" value="baseline and differential"/>
</dbReference>
<dbReference type="GO" id="GO:0071818">
    <property type="term" value="C:BAT3 complex"/>
    <property type="evidence" value="ECO:0000314"/>
    <property type="project" value="UniProtKB"/>
</dbReference>
<dbReference type="GO" id="GO:0005694">
    <property type="term" value="C:chromosome"/>
    <property type="evidence" value="ECO:0000314"/>
    <property type="project" value="HPA"/>
</dbReference>
<dbReference type="GO" id="GO:0005737">
    <property type="term" value="C:cytoplasm"/>
    <property type="evidence" value="ECO:0000314"/>
    <property type="project" value="ParkinsonsUK-UCL"/>
</dbReference>
<dbReference type="GO" id="GO:0005829">
    <property type="term" value="C:cytosol"/>
    <property type="evidence" value="ECO:0000314"/>
    <property type="project" value="HPA"/>
</dbReference>
<dbReference type="GO" id="GO:0005730">
    <property type="term" value="C:nucleolus"/>
    <property type="evidence" value="ECO:0000314"/>
    <property type="project" value="HPA"/>
</dbReference>
<dbReference type="GO" id="GO:0005654">
    <property type="term" value="C:nucleoplasm"/>
    <property type="evidence" value="ECO:0000314"/>
    <property type="project" value="HPA"/>
</dbReference>
<dbReference type="GO" id="GO:0140597">
    <property type="term" value="F:protein carrier chaperone"/>
    <property type="evidence" value="ECO:0000315"/>
    <property type="project" value="ParkinsonsUK-UCL"/>
</dbReference>
<dbReference type="GO" id="GO:0051087">
    <property type="term" value="F:protein-folding chaperone binding"/>
    <property type="evidence" value="ECO:0000353"/>
    <property type="project" value="BHF-UCL"/>
</dbReference>
<dbReference type="GO" id="GO:0036503">
    <property type="term" value="P:ERAD pathway"/>
    <property type="evidence" value="ECO:0000315"/>
    <property type="project" value="ParkinsonsUK-UCL"/>
</dbReference>
<dbReference type="GO" id="GO:0036506">
    <property type="term" value="P:maintenance of unfolded protein"/>
    <property type="evidence" value="ECO:0000315"/>
    <property type="project" value="ParkinsonsUK-UCL"/>
</dbReference>
<dbReference type="GO" id="GO:0006620">
    <property type="term" value="P:post-translational protein targeting to endoplasmic reticulum membrane"/>
    <property type="evidence" value="ECO:0000314"/>
    <property type="project" value="ComplexPortal"/>
</dbReference>
<dbReference type="GO" id="GO:0045048">
    <property type="term" value="P:protein insertion into ER membrane"/>
    <property type="evidence" value="ECO:0000315"/>
    <property type="project" value="UniProtKB"/>
</dbReference>
<dbReference type="GO" id="GO:0031647">
    <property type="term" value="P:regulation of protein stability"/>
    <property type="evidence" value="ECO:0000314"/>
    <property type="project" value="ComplexPortal"/>
</dbReference>
<dbReference type="GO" id="GO:0071816">
    <property type="term" value="P:tail-anchored membrane protein insertion into ER membrane"/>
    <property type="evidence" value="ECO:0000314"/>
    <property type="project" value="UniProtKB"/>
</dbReference>
<dbReference type="GO" id="GO:0006511">
    <property type="term" value="P:ubiquitin-dependent protein catabolic process"/>
    <property type="evidence" value="ECO:0000314"/>
    <property type="project" value="ComplexPortal"/>
</dbReference>
<dbReference type="FunFam" id="1.25.40.10:FF:000060">
    <property type="entry name" value="Golgi to ER traffic protein 4 homolog"/>
    <property type="match status" value="1"/>
</dbReference>
<dbReference type="Gene3D" id="1.25.40.10">
    <property type="entry name" value="Tetratricopeptide repeat domain"/>
    <property type="match status" value="1"/>
</dbReference>
<dbReference type="InterPro" id="IPR007317">
    <property type="entry name" value="GET4"/>
</dbReference>
<dbReference type="InterPro" id="IPR011990">
    <property type="entry name" value="TPR-like_helical_dom_sf"/>
</dbReference>
<dbReference type="PANTHER" id="PTHR12875">
    <property type="entry name" value="GOLGI TO ER TRAFFIC PROTEIN 4 HOMOLOG"/>
    <property type="match status" value="1"/>
</dbReference>
<dbReference type="PANTHER" id="PTHR12875:SF0">
    <property type="entry name" value="GOLGI TO ER TRAFFIC PROTEIN 4 HOMOLOG"/>
    <property type="match status" value="1"/>
</dbReference>
<dbReference type="Pfam" id="PF04190">
    <property type="entry name" value="GET4"/>
    <property type="match status" value="1"/>
</dbReference>
<feature type="initiator methionine" description="Removed" evidence="10 19 20 21">
    <location>
        <position position="1"/>
    </location>
</feature>
<feature type="chain" id="PRO_0000228104" description="Golgi to ER traffic protein 4 homolog">
    <location>
        <begin position="2"/>
        <end position="327"/>
    </location>
</feature>
<feature type="region of interest" description="Interacts with BAG6" evidence="5 7">
    <location>
        <begin position="195"/>
        <end position="271"/>
    </location>
</feature>
<feature type="region of interest" description="Disordered" evidence="1">
    <location>
        <begin position="307"/>
        <end position="327"/>
    </location>
</feature>
<feature type="modified residue" description="N-acetylalanine" evidence="10 19 20 21">
    <location>
        <position position="2"/>
    </location>
</feature>
<feature type="modified residue" description="Phosphoserine" evidence="22">
    <location>
        <position position="12"/>
    </location>
</feature>
<feature type="splice variant" id="VSP_017652" description="In isoform 2." evidence="11 12">
    <location>
        <begin position="1"/>
        <end position="53"/>
    </location>
</feature>
<feature type="sequence variant" id="VAR_088084" description="In CDG2Y; uncertain significance; dbSNP:rs1268790820." evidence="8">
    <original>R</original>
    <variation>H</variation>
    <location>
        <position position="122"/>
    </location>
</feature>
<feature type="sequence variant" id="VAR_088085" description="In CDG2Y; uncertain significance; dbSNP:rs1844404490." evidence="8">
    <original>I</original>
    <variation>M</variation>
    <location>
        <position position="279"/>
    </location>
</feature>
<feature type="mutagenesis site" description="Loss of interaction with GET3; when associated with D-29. Impairs tail-anchored protein delivery; when associetd with D-29." evidence="9">
    <original>R</original>
    <variation>D</variation>
    <location>
        <position position="25"/>
    </location>
</feature>
<feature type="mutagenesis site" description="Loss of interaction with GET3; when associated with D-25. Impairs tail-anchored protein delivery; when associetd with D-25." evidence="9">
    <original>K</original>
    <variation>D</variation>
    <location>
        <position position="29"/>
    </location>
</feature>
<feature type="mutagenesis site" description="Reduces tail-anchored protein delivery." evidence="5">
    <original>D</original>
    <variation>K</variation>
    <location>
        <position position="84"/>
    </location>
</feature>
<feature type="mutagenesis site" description="No effect on interaction with BAG6." evidence="7">
    <original>Y</original>
    <variation>A</variation>
    <location>
        <position position="182"/>
    </location>
</feature>
<feature type="mutagenesis site" description="No effect on interaction with BAG6." evidence="7">
    <original>F</original>
    <variation>A</variation>
    <location>
        <position position="188"/>
    </location>
</feature>
<feature type="mutagenesis site" description="No effect on interaction with BAG6." evidence="7">
    <original>F</original>
    <variation>A</variation>
    <location>
        <position position="195"/>
    </location>
</feature>
<feature type="mutagenesis site" description="No effect on interaction with BAG6." evidence="7">
    <original>W</original>
    <variation>A</variation>
    <location>
        <position position="241"/>
    </location>
</feature>
<feature type="mutagenesis site" description="No effect on interaction with BAG6." evidence="7">
    <original>F</original>
    <variation>A</variation>
    <location>
        <position position="242"/>
    </location>
</feature>
<feature type="mutagenesis site" description="No effect on interaction with BAG6." evidence="7">
    <original>V</original>
    <variation>A</variation>
    <location>
        <position position="257"/>
    </location>
</feature>
<feature type="mutagenesis site" description="No effect on interaction with BAG6." evidence="7">
    <original>L</original>
    <variation>A</variation>
    <location>
        <position position="258"/>
    </location>
</feature>
<feature type="mutagenesis site" description="No effect on interaction with BAG6." evidence="7">
    <original>C</original>
    <variation>A</variation>
    <location>
        <position position="259"/>
    </location>
</feature>
<feature type="mutagenesis site" description="Inhibits interaction with BAG6." evidence="7">
    <original>Y</original>
    <variation>A</variation>
    <location>
        <position position="262"/>
    </location>
</feature>
<feature type="mutagenesis site" description="No effect on interaction with BAG6." evidence="7">
    <original>L</original>
    <variation>A</variation>
    <location>
        <position position="266"/>
    </location>
</feature>
<feature type="mutagenesis site" description="No effect on interaction with GET3. No effect on tail-anchored protein delivery." evidence="9">
    <original>R</original>
    <variation>E</variation>
    <location>
        <position position="278"/>
    </location>
</feature>
<feature type="sequence conflict" description="In Ref. 6; AAD27729." evidence="13" ref="6">
    <original>EQESARNGGRNRGG</original>
    <variation>DRRAPATALQPRA</variation>
    <location>
        <begin position="9"/>
        <end position="22"/>
    </location>
</feature>
<feature type="sequence conflict" description="In Ref. 6; AAD27729." evidence="13" ref="6">
    <original>N</original>
    <variation>D</variation>
    <location>
        <position position="177"/>
    </location>
</feature>
<feature type="helix" evidence="23">
    <location>
        <begin position="26"/>
        <end position="35"/>
    </location>
</feature>
<feature type="helix" evidence="23">
    <location>
        <begin position="39"/>
        <end position="55"/>
    </location>
</feature>
<feature type="helix" evidence="23">
    <location>
        <begin position="59"/>
        <end position="75"/>
    </location>
</feature>
<feature type="helix" evidence="23">
    <location>
        <begin position="79"/>
        <end position="95"/>
    </location>
</feature>
<feature type="helix" evidence="23">
    <location>
        <begin position="102"/>
        <end position="114"/>
    </location>
</feature>
<feature type="helix" evidence="23">
    <location>
        <begin position="120"/>
        <end position="133"/>
    </location>
</feature>
<feature type="helix" evidence="23">
    <location>
        <begin position="143"/>
        <end position="155"/>
    </location>
</feature>
<feature type="helix" evidence="23">
    <location>
        <begin position="159"/>
        <end position="167"/>
    </location>
</feature>
<feature type="helix" evidence="23">
    <location>
        <begin position="172"/>
        <end position="186"/>
    </location>
</feature>
<feature type="helix" evidence="23">
    <location>
        <begin position="189"/>
        <end position="191"/>
    </location>
</feature>
<feature type="helix" evidence="23">
    <location>
        <begin position="192"/>
        <end position="205"/>
    </location>
</feature>
<feature type="helix" evidence="23">
    <location>
        <begin position="209"/>
        <end position="222"/>
    </location>
</feature>
<feature type="strand" evidence="24">
    <location>
        <begin position="228"/>
        <end position="231"/>
    </location>
</feature>
<feature type="helix" evidence="23">
    <location>
        <begin position="235"/>
        <end position="248"/>
    </location>
</feature>
<feature type="helix" evidence="23">
    <location>
        <begin position="252"/>
        <end position="261"/>
    </location>
</feature>
<feature type="helix" evidence="23">
    <location>
        <begin position="263"/>
        <end position="266"/>
    </location>
</feature>
<feature type="helix" evidence="23">
    <location>
        <begin position="272"/>
        <end position="284"/>
    </location>
</feature>
<feature type="helix" evidence="23">
    <location>
        <begin position="294"/>
        <end position="298"/>
    </location>
</feature>
<feature type="helix" evidence="23">
    <location>
        <begin position="301"/>
        <end position="303"/>
    </location>
</feature>
<sequence>MAAAAAMAEQESARNGGRNRGGVQRVEGKLRASVEKGDYYEAHQMYRTLFFRYMSQSKHTEARELMYSGALLFFSHGQQNSAADLSMLVLESLEKAEVEVADELLENLAKVFSLMDPNSPERVTFVSRALKWSSGGSGKLGHPRLHQLLALTLWKEQNYCESRYHFLHSADGEGCANMLVEYSTSRGFRSEVDMFVAQAVLQFLCLKNKSSASVVFTTYTQKHPSIEDGPPFVEPLLNFIWFLLLAVDGGKLTVFTVLCEQYQPSLRRDPMYNEYLDRIGQLFFGVPPKQTSSYGGLLGNLLTSLMGSSEQEDGEESPSDGSPIELD</sequence>
<comment type="function">
    <text evidence="2 3 4 5 6 8">As part of a cytosolic protein quality control complex, the BAG6/BAT3 complex, maintains misfolded and hydrophobic patches-containing proteins in a soluble state and participates in their proper delivery to the endoplasmic reticulum or alternatively can promote their sorting to the proteasome where they undergo degradation (PubMed:20676083, PubMed:21636303, PubMed:21743475, PubMed:28104892, PubMed:32395830). The BAG6/BAT3 complex is involved in the post-translational delivery of tail-anchored/type II transmembrane proteins to the endoplasmic reticulum membrane. Recruited to ribosomes, it interacts with the transmembrane region of newly synthesized tail-anchored proteins and together with SGTA and ASNA1 mediates their delivery to the endoplasmic reticulum (PubMed:20676083, PubMed:25535373, PubMed:28104892). Client proteins that cannot be properly delivered to the endoplasmic reticulum are ubiquitinated and sorted to the proteasome (PubMed:28104892). Similarly, the BAG6/BAT3 complex also functions as a sorting platform for proteins of the secretory pathway that are mislocalized to the cytosol either delivering them to the proteasome for degradation or to the endoplasmic reticulum (PubMed:21743475). The BAG6/BAT3 complex also plays a role in the endoplasmic reticulum-associated degradation (ERAD), a quality control mechanism that eliminates unwanted proteins of the endoplasmic reticulum through their retrotranslocation to the cytosol and their targeting to the proteasome. It maintains these retrotranslocated proteins in an unfolded yet soluble state condition in the cytosol to ensure their proper delivery to the proteasome (PubMed:21636303).</text>
</comment>
<comment type="subunit">
    <text evidence="2 3 5 7 9">Component of the BAG6/BAT3 complex, at least composed of BAG6, UBL4A and GET4/TRC35 (PubMed:20676083, PubMed:25535373). Interacts with BAG6; the interaction is direct and localizes BAG6 to the cytosol (PubMed:21636303, PubMed:25535373, PubMed:29042515). Interacts with GET3 (PubMed:34887561).</text>
</comment>
<comment type="interaction">
    <interactant intactId="EBI-711823">
        <id>Q7L5D6</id>
    </interactant>
    <interactant intactId="EBI-8643161">
        <id>Q9NX04</id>
        <label>AIRIM</label>
    </interactant>
    <organismsDiffer>false</organismsDiffer>
    <experiments>3</experiments>
</comment>
<comment type="interaction">
    <interactant intactId="EBI-711823">
        <id>Q7L5D6</id>
    </interactant>
    <interactant intactId="EBI-10988864">
        <id>P46379-2</id>
        <label>BAG6</label>
    </interactant>
    <organismsDiffer>false</organismsDiffer>
    <experiments>4</experiments>
</comment>
<comment type="interaction">
    <interactant intactId="EBI-711823">
        <id>Q7L5D6</id>
    </interactant>
    <interactant intactId="EBI-7357329">
        <id>Q9H596</id>
        <label>DUSP21</label>
    </interactant>
    <organismsDiffer>false</organismsDiffer>
    <experiments>3</experiments>
</comment>
<comment type="interaction">
    <interactant intactId="EBI-711823">
        <id>Q7L5D6</id>
    </interactant>
    <interactant intactId="EBI-744099">
        <id>Q9H0I2</id>
        <label>ENKD1</label>
    </interactant>
    <organismsDiffer>false</organismsDiffer>
    <experiments>3</experiments>
</comment>
<comment type="interaction">
    <interactant intactId="EBI-711823">
        <id>Q7L5D6</id>
    </interactant>
    <interactant intactId="EBI-2505934">
        <id>P35555</id>
        <label>FBN1</label>
    </interactant>
    <organismsDiffer>false</organismsDiffer>
    <experiments>3</experiments>
</comment>
<comment type="interaction">
    <interactant intactId="EBI-711823">
        <id>Q7L5D6</id>
    </interactant>
    <interactant intactId="EBI-2515857">
        <id>O43681</id>
        <label>GET3</label>
    </interactant>
    <organismsDiffer>false</organismsDiffer>
    <experiments>6</experiments>
</comment>
<comment type="interaction">
    <interactant intactId="EBI-711823">
        <id>Q7L5D6</id>
    </interactant>
    <interactant intactId="EBI-12028686">
        <id>Q14161-11</id>
        <label>GIT2</label>
    </interactant>
    <organismsDiffer>false</organismsDiffer>
    <experiments>3</experiments>
</comment>
<comment type="interaction">
    <interactant intactId="EBI-711823">
        <id>Q7L5D6</id>
    </interactant>
    <interactant intactId="EBI-1043191">
        <id>Q9BYQ3</id>
        <label>KRTAP9-3</label>
    </interactant>
    <organismsDiffer>false</organismsDiffer>
    <experiments>3</experiments>
</comment>
<comment type="interaction">
    <interactant intactId="EBI-711823">
        <id>Q7L5D6</id>
    </interactant>
    <interactant intactId="EBI-947048">
        <id>P69849</id>
        <label>NOMO3</label>
    </interactant>
    <organismsDiffer>false</organismsDiffer>
    <experiments>2</experiments>
</comment>
<comment type="interaction">
    <interactant intactId="EBI-711823">
        <id>Q7L5D6</id>
    </interactant>
    <interactant intactId="EBI-716392">
        <id>Q9BW27</id>
        <label>NUP85</label>
    </interactant>
    <organismsDiffer>false</organismsDiffer>
    <experiments>3</experiments>
</comment>
<comment type="interaction">
    <interactant intactId="EBI-711823">
        <id>Q7L5D6</id>
    </interactant>
    <interactant intactId="EBI-1053424">
        <id>O43741</id>
        <label>PRKAB2</label>
    </interactant>
    <organismsDiffer>false</organismsDiffer>
    <experiments>8</experiments>
</comment>
<comment type="interaction">
    <interactant intactId="EBI-711823">
        <id>Q7L5D6</id>
    </interactant>
    <interactant intactId="EBI-727004">
        <id>O00560</id>
        <label>SDCBP</label>
    </interactant>
    <organismsDiffer>false</organismsDiffer>
    <experiments>3</experiments>
</comment>
<comment type="subcellular location">
    <subcellularLocation>
        <location evidence="2 3 7 8">Cytoplasm</location>
        <location evidence="2 3 7 8">Cytosol</location>
    </subcellularLocation>
</comment>
<comment type="alternative products">
    <event type="alternative splicing"/>
    <isoform>
        <id>Q7L5D6-1</id>
        <name>1</name>
        <sequence type="displayed"/>
    </isoform>
    <isoform>
        <id>Q7L5D6-2</id>
        <name>2</name>
        <sequence type="described" ref="VSP_017652"/>
    </isoform>
</comment>
<comment type="PTM">
    <text evidence="7">Ubiquitinated by RNF12, leading to proteasomal degradation. When unassembled from BAG6; ubiquitinylation is modulated by BAG6 quality control role and effectuated by RNF126.</text>
</comment>
<comment type="disease" evidence="8">
    <disease id="DI-06593">
        <name>Congenital disorder of glycosylation 2Y</name>
        <acronym>CDG2Y</acronym>
        <description>A form of congenital disorder of glycosylation, a genetically heterogeneous group of multisystem disorders caused by a defect in glycoprotein biosynthesis and characterized by under-glycosylated serum glycoproteins. Congenital disorders of glycosylation result in a wide variety of clinical features, such as defects in the nervous system development, psychomotor retardation, dysmorphic features, hypotonia, coagulation disorders, and immunodeficiency. The broad spectrum of features reflects the critical role of N-glycoproteins during embryonic development, differentiation, and maintenance of cell functions. CDG2Y is an autosomal recessive form characterized by poor overall growth and global developmental delay with impaired intellectual development. Other features may include hypotonia, seizures, brain imaging abnormalities, dysmorphic features, and various skeletal defects.</description>
        <dbReference type="MIM" id="620200"/>
    </disease>
    <text>The disease may be caused by variants affecting the gene represented in this entry.</text>
</comment>
<comment type="similarity">
    <text evidence="13">Belongs to the GET4 family.</text>
</comment>
<gene>
    <name evidence="14" type="primary">GET4</name>
    <name type="synonym">C7orf20</name>
    <name type="synonym">CEE</name>
    <name type="synonym">TRC35</name>
    <name type="ORF">CGI-20</name>
</gene>
<keyword id="KW-0002">3D-structure</keyword>
<keyword id="KW-0007">Acetylation</keyword>
<keyword id="KW-0025">Alternative splicing</keyword>
<keyword id="KW-0900">Congenital disorder of glycosylation</keyword>
<keyword id="KW-0963">Cytoplasm</keyword>
<keyword id="KW-0903">Direct protein sequencing</keyword>
<keyword id="KW-0225">Disease variant</keyword>
<keyword id="KW-0597">Phosphoprotein</keyword>
<keyword id="KW-1267">Proteomics identification</keyword>
<keyword id="KW-1185">Reference proteome</keyword>
<keyword id="KW-0813">Transport</keyword>
<keyword id="KW-0832">Ubl conjugation</keyword>
<accession>Q7L5D6</accession>
<accession>A4D2Q1</accession>
<accession>B3KNC7</accession>
<accession>Q9UFC9</accession>
<accession>Q9Y309</accession>
<reference key="1">
    <citation type="journal article" date="2004" name="Nat. Genet.">
        <title>Complete sequencing and characterization of 21,243 full-length human cDNAs.</title>
        <authorList>
            <person name="Ota T."/>
            <person name="Suzuki Y."/>
            <person name="Nishikawa T."/>
            <person name="Otsuki T."/>
            <person name="Sugiyama T."/>
            <person name="Irie R."/>
            <person name="Wakamatsu A."/>
            <person name="Hayashi K."/>
            <person name="Sato H."/>
            <person name="Nagai K."/>
            <person name="Kimura K."/>
            <person name="Makita H."/>
            <person name="Sekine M."/>
            <person name="Obayashi M."/>
            <person name="Nishi T."/>
            <person name="Shibahara T."/>
            <person name="Tanaka T."/>
            <person name="Ishii S."/>
            <person name="Yamamoto J."/>
            <person name="Saito K."/>
            <person name="Kawai Y."/>
            <person name="Isono Y."/>
            <person name="Nakamura Y."/>
            <person name="Nagahari K."/>
            <person name="Murakami K."/>
            <person name="Yasuda T."/>
            <person name="Iwayanagi T."/>
            <person name="Wagatsuma M."/>
            <person name="Shiratori A."/>
            <person name="Sudo H."/>
            <person name="Hosoiri T."/>
            <person name="Kaku Y."/>
            <person name="Kodaira H."/>
            <person name="Kondo H."/>
            <person name="Sugawara M."/>
            <person name="Takahashi M."/>
            <person name="Kanda K."/>
            <person name="Yokoi T."/>
            <person name="Furuya T."/>
            <person name="Kikkawa E."/>
            <person name="Omura Y."/>
            <person name="Abe K."/>
            <person name="Kamihara K."/>
            <person name="Katsuta N."/>
            <person name="Sato K."/>
            <person name="Tanikawa M."/>
            <person name="Yamazaki M."/>
            <person name="Ninomiya K."/>
            <person name="Ishibashi T."/>
            <person name="Yamashita H."/>
            <person name="Murakawa K."/>
            <person name="Fujimori K."/>
            <person name="Tanai H."/>
            <person name="Kimata M."/>
            <person name="Watanabe M."/>
            <person name="Hiraoka S."/>
            <person name="Chiba Y."/>
            <person name="Ishida S."/>
            <person name="Ono Y."/>
            <person name="Takiguchi S."/>
            <person name="Watanabe S."/>
            <person name="Yosida M."/>
            <person name="Hotuta T."/>
            <person name="Kusano J."/>
            <person name="Kanehori K."/>
            <person name="Takahashi-Fujii A."/>
            <person name="Hara H."/>
            <person name="Tanase T.-O."/>
            <person name="Nomura Y."/>
            <person name="Togiya S."/>
            <person name="Komai F."/>
            <person name="Hara R."/>
            <person name="Takeuchi K."/>
            <person name="Arita M."/>
            <person name="Imose N."/>
            <person name="Musashino K."/>
            <person name="Yuuki H."/>
            <person name="Oshima A."/>
            <person name="Sasaki N."/>
            <person name="Aotsuka S."/>
            <person name="Yoshikawa Y."/>
            <person name="Matsunawa H."/>
            <person name="Ichihara T."/>
            <person name="Shiohata N."/>
            <person name="Sano S."/>
            <person name="Moriya S."/>
            <person name="Momiyama H."/>
            <person name="Satoh N."/>
            <person name="Takami S."/>
            <person name="Terashima Y."/>
            <person name="Suzuki O."/>
            <person name="Nakagawa S."/>
            <person name="Senoh A."/>
            <person name="Mizoguchi H."/>
            <person name="Goto Y."/>
            <person name="Shimizu F."/>
            <person name="Wakebe H."/>
            <person name="Hishigaki H."/>
            <person name="Watanabe T."/>
            <person name="Sugiyama A."/>
            <person name="Takemoto M."/>
            <person name="Kawakami B."/>
            <person name="Yamazaki M."/>
            <person name="Watanabe K."/>
            <person name="Kumagai A."/>
            <person name="Itakura S."/>
            <person name="Fukuzumi Y."/>
            <person name="Fujimori Y."/>
            <person name="Komiyama M."/>
            <person name="Tashiro H."/>
            <person name="Tanigami A."/>
            <person name="Fujiwara T."/>
            <person name="Ono T."/>
            <person name="Yamada K."/>
            <person name="Fujii Y."/>
            <person name="Ozaki K."/>
            <person name="Hirao M."/>
            <person name="Ohmori Y."/>
            <person name="Kawabata A."/>
            <person name="Hikiji T."/>
            <person name="Kobatake N."/>
            <person name="Inagaki H."/>
            <person name="Ikema Y."/>
            <person name="Okamoto S."/>
            <person name="Okitani R."/>
            <person name="Kawakami T."/>
            <person name="Noguchi S."/>
            <person name="Itoh T."/>
            <person name="Shigeta K."/>
            <person name="Senba T."/>
            <person name="Matsumura K."/>
            <person name="Nakajima Y."/>
            <person name="Mizuno T."/>
            <person name="Morinaga M."/>
            <person name="Sasaki M."/>
            <person name="Togashi T."/>
            <person name="Oyama M."/>
            <person name="Hata H."/>
            <person name="Watanabe M."/>
            <person name="Komatsu T."/>
            <person name="Mizushima-Sugano J."/>
            <person name="Satoh T."/>
            <person name="Shirai Y."/>
            <person name="Takahashi Y."/>
            <person name="Nakagawa K."/>
            <person name="Okumura K."/>
            <person name="Nagase T."/>
            <person name="Nomura N."/>
            <person name="Kikuchi H."/>
            <person name="Masuho Y."/>
            <person name="Yamashita R."/>
            <person name="Nakai K."/>
            <person name="Yada T."/>
            <person name="Nakamura Y."/>
            <person name="Ohara O."/>
            <person name="Isogai T."/>
            <person name="Sugano S."/>
        </authorList>
    </citation>
    <scope>NUCLEOTIDE SEQUENCE [LARGE SCALE MRNA] (ISOFORM 2)</scope>
    <source>
        <tissue>Ovary</tissue>
        <tissue>Testis</tissue>
        <tissue>Thymus</tissue>
    </source>
</reference>
<reference key="2">
    <citation type="journal article" date="2007" name="BMC Genomics">
        <title>The full-ORF clone resource of the German cDNA consortium.</title>
        <authorList>
            <person name="Bechtel S."/>
            <person name="Rosenfelder H."/>
            <person name="Duda A."/>
            <person name="Schmidt C.P."/>
            <person name="Ernst U."/>
            <person name="Wellenreuther R."/>
            <person name="Mehrle A."/>
            <person name="Schuster C."/>
            <person name="Bahr A."/>
            <person name="Bloecker H."/>
            <person name="Heubner D."/>
            <person name="Hoerlein A."/>
            <person name="Michel G."/>
            <person name="Wedler H."/>
            <person name="Koehrer K."/>
            <person name="Ottenwaelder B."/>
            <person name="Poustka A."/>
            <person name="Wiemann S."/>
            <person name="Schupp I."/>
        </authorList>
    </citation>
    <scope>NUCLEOTIDE SEQUENCE [LARGE SCALE MRNA] (ISOFORM 2)</scope>
    <source>
        <tissue>Testis</tissue>
    </source>
</reference>
<reference key="3">
    <citation type="journal article" date="2003" name="Science">
        <title>Human chromosome 7: DNA sequence and biology.</title>
        <authorList>
            <person name="Scherer S.W."/>
            <person name="Cheung J."/>
            <person name="MacDonald J.R."/>
            <person name="Osborne L.R."/>
            <person name="Nakabayashi K."/>
            <person name="Herbrick J.-A."/>
            <person name="Carson A.R."/>
            <person name="Parker-Katiraee L."/>
            <person name="Skaug J."/>
            <person name="Khaja R."/>
            <person name="Zhang J."/>
            <person name="Hudek A.K."/>
            <person name="Li M."/>
            <person name="Haddad M."/>
            <person name="Duggan G.E."/>
            <person name="Fernandez B.A."/>
            <person name="Kanematsu E."/>
            <person name="Gentles S."/>
            <person name="Christopoulos C.C."/>
            <person name="Choufani S."/>
            <person name="Kwasnicka D."/>
            <person name="Zheng X.H."/>
            <person name="Lai Z."/>
            <person name="Nusskern D.R."/>
            <person name="Zhang Q."/>
            <person name="Gu Z."/>
            <person name="Lu F."/>
            <person name="Zeesman S."/>
            <person name="Nowaczyk M.J."/>
            <person name="Teshima I."/>
            <person name="Chitayat D."/>
            <person name="Shuman C."/>
            <person name="Weksberg R."/>
            <person name="Zackai E.H."/>
            <person name="Grebe T.A."/>
            <person name="Cox S.R."/>
            <person name="Kirkpatrick S.J."/>
            <person name="Rahman N."/>
            <person name="Friedman J.M."/>
            <person name="Heng H.H.Q."/>
            <person name="Pelicci P.G."/>
            <person name="Lo-Coco F."/>
            <person name="Belloni E."/>
            <person name="Shaffer L.G."/>
            <person name="Pober B."/>
            <person name="Morton C.C."/>
            <person name="Gusella J.F."/>
            <person name="Bruns G.A.P."/>
            <person name="Korf B.R."/>
            <person name="Quade B.J."/>
            <person name="Ligon A.H."/>
            <person name="Ferguson H."/>
            <person name="Higgins A.W."/>
            <person name="Leach N.T."/>
            <person name="Herrick S.R."/>
            <person name="Lemyre E."/>
            <person name="Farra C.G."/>
            <person name="Kim H.-G."/>
            <person name="Summers A.M."/>
            <person name="Gripp K.W."/>
            <person name="Roberts W."/>
            <person name="Szatmari P."/>
            <person name="Winsor E.J.T."/>
            <person name="Grzeschik K.-H."/>
            <person name="Teebi A."/>
            <person name="Minassian B.A."/>
            <person name="Kere J."/>
            <person name="Armengol L."/>
            <person name="Pujana M.A."/>
            <person name="Estivill X."/>
            <person name="Wilson M.D."/>
            <person name="Koop B.F."/>
            <person name="Tosi S."/>
            <person name="Moore G.E."/>
            <person name="Boright A.P."/>
            <person name="Zlotorynski E."/>
            <person name="Kerem B."/>
            <person name="Kroisel P.M."/>
            <person name="Petek E."/>
            <person name="Oscier D.G."/>
            <person name="Mould S.J."/>
            <person name="Doehner H."/>
            <person name="Doehner K."/>
            <person name="Rommens J.M."/>
            <person name="Vincent J.B."/>
            <person name="Venter J.C."/>
            <person name="Li P.W."/>
            <person name="Mural R.J."/>
            <person name="Adams M.D."/>
            <person name="Tsui L.-C."/>
        </authorList>
    </citation>
    <scope>NUCLEOTIDE SEQUENCE [LARGE SCALE GENOMIC DNA]</scope>
</reference>
<reference key="4">
    <citation type="journal article" date="2004" name="Genome Res.">
        <title>The status, quality, and expansion of the NIH full-length cDNA project: the Mammalian Gene Collection (MGC).</title>
        <authorList>
            <consortium name="The MGC Project Team"/>
        </authorList>
    </citation>
    <scope>NUCLEOTIDE SEQUENCE [LARGE SCALE MRNA] (ISOFORM 1)</scope>
    <source>
        <tissue>Placenta</tissue>
    </source>
</reference>
<reference key="5">
    <citation type="submission" date="2008-03" db="UniProtKB">
        <authorList>
            <person name="Bienvenut W.V."/>
            <person name="Vousden K.H."/>
            <person name="Lukashchuk N."/>
        </authorList>
    </citation>
    <scope>PROTEIN SEQUENCE OF 2-14 AND 111-122</scope>
    <scope>CLEAVAGE OF INITIATOR METHIONINE</scope>
    <scope>ACETYLATION AT ALA-2</scope>
    <scope>IDENTIFICATION BY MASS SPECTROMETRY</scope>
    <source>
        <tissue>Lung carcinoma</tissue>
    </source>
</reference>
<reference key="6">
    <citation type="journal article" date="2000" name="Genome Res.">
        <title>Identification of novel human genes evolutionarily conserved in Caenorhabditis elegans by comparative proteomics.</title>
        <authorList>
            <person name="Lai C.-H."/>
            <person name="Chou C.-Y."/>
            <person name="Ch'ang L.-Y."/>
            <person name="Liu C.-S."/>
            <person name="Lin W.-C."/>
        </authorList>
    </citation>
    <scope>NUCLEOTIDE SEQUENCE [LARGE SCALE MRNA] OF 8-327 (ISOFORM 1)</scope>
</reference>
<reference key="7">
    <citation type="journal article" date="2008" name="Genomics">
        <title>Genomic, evolutionary, and expression analyses of cee, an ancient gene involved in normal growth and development.</title>
        <authorList>
            <person name="Fernandes J.M.O."/>
            <person name="Macqueen D.J."/>
            <person name="Lee H.-T."/>
            <person name="Johnston I.A."/>
        </authorList>
    </citation>
    <scope>IDENTIFICATION</scope>
</reference>
<reference key="8">
    <citation type="journal article" date="2009" name="Anal. Chem.">
        <title>Lys-N and trypsin cover complementary parts of the phosphoproteome in a refined SCX-based approach.</title>
        <authorList>
            <person name="Gauci S."/>
            <person name="Helbig A.O."/>
            <person name="Slijper M."/>
            <person name="Krijgsveld J."/>
            <person name="Heck A.J."/>
            <person name="Mohammed S."/>
        </authorList>
    </citation>
    <scope>ACETYLATION [LARGE SCALE ANALYSIS] AT ALA-2</scope>
    <scope>CLEAVAGE OF INITIATOR METHIONINE [LARGE SCALE ANALYSIS]</scope>
    <scope>IDENTIFICATION BY MASS SPECTROMETRY [LARGE SCALE ANALYSIS]</scope>
</reference>
<reference key="9">
    <citation type="journal article" date="2010" name="Nature">
        <title>A ribosome-associating factor chaperones tail-anchored membrane proteins.</title>
        <authorList>
            <person name="Mariappan M."/>
            <person name="Li X."/>
            <person name="Stefanovic S."/>
            <person name="Sharma A."/>
            <person name="Mateja A."/>
            <person name="Keenan R.J."/>
            <person name="Hegde R.S."/>
        </authorList>
    </citation>
    <scope>FUNCTION</scope>
    <scope>SUBCELLULAR LOCATION</scope>
    <scope>IDENTIFICATION BY MASS SPECTROMETRY</scope>
    <scope>IDENTIFICATION IN THE BAG6/BAT3 COMPLEX</scope>
</reference>
<reference key="10">
    <citation type="journal article" date="2011" name="BMC Syst. Biol.">
        <title>Initial characterization of the human central proteome.</title>
        <authorList>
            <person name="Burkard T.R."/>
            <person name="Planyavsky M."/>
            <person name="Kaupe I."/>
            <person name="Breitwieser F.P."/>
            <person name="Buerckstuemmer T."/>
            <person name="Bennett K.L."/>
            <person name="Superti-Furga G."/>
            <person name="Colinge J."/>
        </authorList>
    </citation>
    <scope>IDENTIFICATION BY MASS SPECTROMETRY [LARGE SCALE ANALYSIS]</scope>
</reference>
<reference key="11">
    <citation type="journal article" date="2011" name="Mol. Cell">
        <title>A ubiquitin ligase-associated chaperone holdase maintains polypeptides in soluble states for proteasome degradation.</title>
        <authorList>
            <person name="Wang Q."/>
            <person name="Liu Y."/>
            <person name="Soetandyo N."/>
            <person name="Baek K."/>
            <person name="Hegde R."/>
            <person name="Ye Y."/>
        </authorList>
    </citation>
    <scope>FUNCTION</scope>
    <scope>INTERACTION WITH BAG6</scope>
    <scope>SUBCELLULAR LOCATION</scope>
</reference>
<reference key="12">
    <citation type="journal article" date="2011" name="Nature">
        <title>Protein targeting and degradation are coupled for elimination of mislocalized proteins.</title>
        <authorList>
            <person name="Hessa T."/>
            <person name="Sharma A."/>
            <person name="Mariappan M."/>
            <person name="Eshleman H.D."/>
            <person name="Gutierrez E."/>
            <person name="Hegde R.S."/>
        </authorList>
    </citation>
    <scope>FUNCTION</scope>
</reference>
<reference key="13">
    <citation type="journal article" date="2011" name="Sci. Signal.">
        <title>System-wide temporal characterization of the proteome and phosphoproteome of human embryonic stem cell differentiation.</title>
        <authorList>
            <person name="Rigbolt K.T."/>
            <person name="Prokhorova T.A."/>
            <person name="Akimov V."/>
            <person name="Henningsen J."/>
            <person name="Johansen P.T."/>
            <person name="Kratchmarova I."/>
            <person name="Kassem M."/>
            <person name="Mann M."/>
            <person name="Olsen J.V."/>
            <person name="Blagoev B."/>
        </authorList>
    </citation>
    <scope>IDENTIFICATION BY MASS SPECTROMETRY [LARGE SCALE ANALYSIS]</scope>
</reference>
<reference key="14">
    <citation type="journal article" date="2012" name="Mol. Cell. Proteomics">
        <title>Comparative large-scale characterisation of plant vs. mammal proteins reveals similar and idiosyncratic N-alpha acetylation features.</title>
        <authorList>
            <person name="Bienvenut W.V."/>
            <person name="Sumpton D."/>
            <person name="Martinez A."/>
            <person name="Lilla S."/>
            <person name="Espagne C."/>
            <person name="Meinnel T."/>
            <person name="Giglione C."/>
        </authorList>
    </citation>
    <scope>ACETYLATION [LARGE SCALE ANALYSIS] AT ALA-2</scope>
    <scope>CLEAVAGE OF INITIATOR METHIONINE [LARGE SCALE ANALYSIS]</scope>
    <scope>IDENTIFICATION BY MASS SPECTROMETRY [LARGE SCALE ANALYSIS]</scope>
</reference>
<reference key="15">
    <citation type="journal article" date="2012" name="Proc. Natl. Acad. Sci. U.S.A.">
        <title>N-terminal acetylome analyses and functional insights of the N-terminal acetyltransferase NatB.</title>
        <authorList>
            <person name="Van Damme P."/>
            <person name="Lasa M."/>
            <person name="Polevoda B."/>
            <person name="Gazquez C."/>
            <person name="Elosegui-Artola A."/>
            <person name="Kim D.S."/>
            <person name="De Juan-Pardo E."/>
            <person name="Demeyer K."/>
            <person name="Hole K."/>
            <person name="Larrea E."/>
            <person name="Timmerman E."/>
            <person name="Prieto J."/>
            <person name="Arnesen T."/>
            <person name="Sherman F."/>
            <person name="Gevaert K."/>
            <person name="Aldabe R."/>
        </authorList>
    </citation>
    <scope>ACETYLATION [LARGE SCALE ANALYSIS] AT ALA-2</scope>
    <scope>CLEAVAGE OF INITIATOR METHIONINE [LARGE SCALE ANALYSIS]</scope>
    <scope>IDENTIFICATION BY MASS SPECTROMETRY [LARGE SCALE ANALYSIS]</scope>
</reference>
<reference key="16">
    <citation type="journal article" date="2013" name="J. Proteome Res.">
        <title>Toward a comprehensive characterization of a human cancer cell phosphoproteome.</title>
        <authorList>
            <person name="Zhou H."/>
            <person name="Di Palma S."/>
            <person name="Preisinger C."/>
            <person name="Peng M."/>
            <person name="Polat A.N."/>
            <person name="Heck A.J."/>
            <person name="Mohammed S."/>
        </authorList>
    </citation>
    <scope>PHOSPHORYLATION [LARGE SCALE ANALYSIS] AT SER-12</scope>
    <scope>IDENTIFICATION BY MASS SPECTROMETRY [LARGE SCALE ANALYSIS]</scope>
    <source>
        <tissue>Erythroleukemia</tissue>
    </source>
</reference>
<reference key="17">
    <citation type="journal article" date="2015" name="Proc. Natl. Acad. Sci. U.S.A.">
        <title>Bag6 complex contains a minimal tail-anchor-targeting module and a mock BAG domain.</title>
        <authorList>
            <person name="Mock J.Y."/>
            <person name="Chartron J.W."/>
            <person name="Zaslaver M."/>
            <person name="Xu Y."/>
            <person name="Ye Y."/>
            <person name="Clemons W.M. Jr."/>
        </authorList>
    </citation>
    <scope>INTERACTION WITH BAG6</scope>
    <scope>IDENTIFICATION IN THE BAG6/BAT3 COMPLEX</scope>
    <scope>FUNCTION</scope>
    <scope>MUTAGENESIS OF ASP-84</scope>
</reference>
<reference key="18">
    <citation type="journal article" date="2017" name="Science">
        <title>Mechanistic basis for a molecular triage reaction.</title>
        <authorList>
            <person name="Shao S."/>
            <person name="Rodrigo-Brenni M.C."/>
            <person name="Kivlen M.H."/>
            <person name="Hegde R.S."/>
        </authorList>
    </citation>
    <scope>FUNCTION</scope>
</reference>
<reference key="19">
    <citation type="journal article" date="2020" name="J. Inherit. Metab. Dis.">
        <title>Mutations in GET4 disrupt the transmembrane domain recognition complex pathway.</title>
        <authorList>
            <consortium name="Undiagnosed Diseases Network"/>
            <person name="Tambe M.A."/>
            <person name="Ng B.G."/>
            <person name="Shimada S."/>
            <person name="Wolfe L.A."/>
            <person name="Adams D.R."/>
            <person name="Gahl W.A."/>
            <person name="Bamshad M.J."/>
            <person name="Nickerson D.A."/>
            <person name="Malicdan M.C.V."/>
            <person name="Freeze H.H."/>
        </authorList>
    </citation>
    <scope>INVOLVEMENT IN CDG2Y</scope>
    <scope>VARIANTS CDG2Y HIS-122 AND MET-279</scope>
    <scope>FUNCTION</scope>
    <scope>SUBCELLULAR LOCATION</scope>
</reference>
<reference evidence="15" key="20">
    <citation type="journal article" date="2017" name="Proc. Natl. Acad. Sci. U.S.A.">
        <title>Structural basis for regulation of the nucleo-cytoplasmic distribution of Bag6 by TRC35.</title>
        <authorList>
            <person name="Mock J.Y."/>
            <person name="Xu Y."/>
            <person name="Ye Y."/>
            <person name="Clemons W.M. Jr."/>
        </authorList>
    </citation>
    <scope>X-RAY CRYSTALLOGRAPHY (1.80 ANGSTROMS) OF 23-305 IN COMPLEX WITH BAG6</scope>
    <scope>SUBCELLULAR LOCATION</scope>
    <scope>INTERACTION WITH BAG6</scope>
    <scope>MUTAGENESIS OF TYR-182; PHE-188; PHE-195; TRP-241; PHE-242; VAL-257; LEU-258; CYS-259; TYR-262 AND LEU-266</scope>
    <scope>UBIQUITINATION BY RNF126</scope>
</reference>
<reference evidence="16 17 18" key="21">
    <citation type="journal article" date="2021" name="Nat. Struct. Mol. Biol.">
        <title>Structural insights into metazoan pretargeting GET complexes.</title>
        <authorList>
            <person name="Keszei A.F.A."/>
            <person name="Yip M.C.J."/>
            <person name="Hsieh T.C."/>
            <person name="Shao S."/>
        </authorList>
    </citation>
    <scope>STRUCTURE BY ELECTRON MICROSCOPY (3.30 ANGSTROMS) IN COMPLEX WITH BAG6; UBL4A AND GET3</scope>
    <scope>INTERACTION WITH GET3</scope>
    <scope>MUTAGENESIS OF ARG-25; LYS-29 AND ARG-278</scope>
</reference>
<name>GET4_HUMAN</name>
<organism>
    <name type="scientific">Homo sapiens</name>
    <name type="common">Human</name>
    <dbReference type="NCBI Taxonomy" id="9606"/>
    <lineage>
        <taxon>Eukaryota</taxon>
        <taxon>Metazoa</taxon>
        <taxon>Chordata</taxon>
        <taxon>Craniata</taxon>
        <taxon>Vertebrata</taxon>
        <taxon>Euteleostomi</taxon>
        <taxon>Mammalia</taxon>
        <taxon>Eutheria</taxon>
        <taxon>Euarchontoglires</taxon>
        <taxon>Primates</taxon>
        <taxon>Haplorrhini</taxon>
        <taxon>Catarrhini</taxon>
        <taxon>Hominidae</taxon>
        <taxon>Homo</taxon>
    </lineage>
</organism>